<accession>Q252U8</accession>
<keyword id="KW-0378">Hydrolase</keyword>
<keyword id="KW-0441">Lipid A biosynthesis</keyword>
<keyword id="KW-0444">Lipid biosynthesis</keyword>
<keyword id="KW-0443">Lipid metabolism</keyword>
<keyword id="KW-0479">Metal-binding</keyword>
<keyword id="KW-0862">Zinc</keyword>
<sequence length="280" mass="30887">MLERAQRTLKRKVHYSGVGIHFGKSATLTLEPAEENTGIVFYRSDLLGDRIPALLPHVCNTGRSTTLSSGDSVIATVEHLMAALRSSNIDNVIVRCGEEEIPIGDGSSHVFMQLIDEAGICTQNDTVPIAKLARPVYYQTQDTFLAAFPCDELKISYTLHYPQSPTIGTQYRSFVITEESFRKEIAPCRTFALYNELCFLMDRGLIRGGCLENAVVFKDDGIISLGQLRFPDEPVRHKILDLIGDLSLVGRPFVAHIVAVGSGHSSNIALGRKILEELQP</sequence>
<comment type="function">
    <text evidence="1">Catalyzes the hydrolysis of UDP-3-O-myristoyl-N-acetylglucosamine to form UDP-3-O-myristoylglucosamine and acetate, the committed step in lipid A biosynthesis.</text>
</comment>
<comment type="catalytic activity">
    <reaction evidence="1">
        <text>a UDP-3-O-[(3R)-3-hydroxyacyl]-N-acetyl-alpha-D-glucosamine + H2O = a UDP-3-O-[(3R)-3-hydroxyacyl]-alpha-D-glucosamine + acetate</text>
        <dbReference type="Rhea" id="RHEA:67816"/>
        <dbReference type="ChEBI" id="CHEBI:15377"/>
        <dbReference type="ChEBI" id="CHEBI:30089"/>
        <dbReference type="ChEBI" id="CHEBI:137740"/>
        <dbReference type="ChEBI" id="CHEBI:173225"/>
        <dbReference type="EC" id="3.5.1.108"/>
    </reaction>
</comment>
<comment type="cofactor">
    <cofactor evidence="1">
        <name>Zn(2+)</name>
        <dbReference type="ChEBI" id="CHEBI:29105"/>
    </cofactor>
</comment>
<comment type="pathway">
    <text evidence="1">Glycolipid biosynthesis; lipid IV(A) biosynthesis; lipid IV(A) from (3R)-3-hydroxytetradecanoyl-[acyl-carrier-protein] and UDP-N-acetyl-alpha-D-glucosamine: step 2/6.</text>
</comment>
<comment type="similarity">
    <text evidence="1">Belongs to the LpxC family.</text>
</comment>
<evidence type="ECO:0000255" key="1">
    <source>
        <dbReference type="HAMAP-Rule" id="MF_00388"/>
    </source>
</evidence>
<dbReference type="EC" id="3.5.1.108" evidence="1"/>
<dbReference type="EMBL" id="AP006861">
    <property type="protein sequence ID" value="BAE81690.1"/>
    <property type="molecule type" value="Genomic_DNA"/>
</dbReference>
<dbReference type="RefSeq" id="WP_011458463.1">
    <property type="nucleotide sequence ID" value="NC_007899.1"/>
</dbReference>
<dbReference type="SMR" id="Q252U8"/>
<dbReference type="STRING" id="264202.CF0918"/>
<dbReference type="KEGG" id="cfe:CF0918"/>
<dbReference type="eggNOG" id="COG0774">
    <property type="taxonomic scope" value="Bacteria"/>
</dbReference>
<dbReference type="HOGENOM" id="CLU_046528_1_0_0"/>
<dbReference type="OrthoDB" id="9772788at2"/>
<dbReference type="UniPathway" id="UPA00359">
    <property type="reaction ID" value="UER00478"/>
</dbReference>
<dbReference type="Proteomes" id="UP000001260">
    <property type="component" value="Chromosome"/>
</dbReference>
<dbReference type="GO" id="GO:0016020">
    <property type="term" value="C:membrane"/>
    <property type="evidence" value="ECO:0007669"/>
    <property type="project" value="GOC"/>
</dbReference>
<dbReference type="GO" id="GO:0046872">
    <property type="term" value="F:metal ion binding"/>
    <property type="evidence" value="ECO:0007669"/>
    <property type="project" value="UniProtKB-KW"/>
</dbReference>
<dbReference type="GO" id="GO:0103117">
    <property type="term" value="F:UDP-3-O-acyl-N-acetylglucosamine deacetylase activity"/>
    <property type="evidence" value="ECO:0007669"/>
    <property type="project" value="UniProtKB-UniRule"/>
</dbReference>
<dbReference type="GO" id="GO:0009245">
    <property type="term" value="P:lipid A biosynthetic process"/>
    <property type="evidence" value="ECO:0007669"/>
    <property type="project" value="UniProtKB-UniRule"/>
</dbReference>
<dbReference type="Gene3D" id="3.30.230.20">
    <property type="entry name" value="lpxc deacetylase, domain 1"/>
    <property type="match status" value="1"/>
</dbReference>
<dbReference type="Gene3D" id="3.30.1700.10">
    <property type="entry name" value="lpxc deacetylase, domain 2"/>
    <property type="match status" value="1"/>
</dbReference>
<dbReference type="HAMAP" id="MF_00388">
    <property type="entry name" value="LpxC"/>
    <property type="match status" value="1"/>
</dbReference>
<dbReference type="InterPro" id="IPR020568">
    <property type="entry name" value="Ribosomal_Su5_D2-typ_SF"/>
</dbReference>
<dbReference type="InterPro" id="IPR004463">
    <property type="entry name" value="UDP-acyl_GlcNac_deAcase"/>
</dbReference>
<dbReference type="InterPro" id="IPR011334">
    <property type="entry name" value="UDP-acyl_GlcNac_deAcase_C"/>
</dbReference>
<dbReference type="InterPro" id="IPR015870">
    <property type="entry name" value="UDP-acyl_N-AcGlcN_deAcase_N"/>
</dbReference>
<dbReference type="NCBIfam" id="TIGR00325">
    <property type="entry name" value="lpxC"/>
    <property type="match status" value="1"/>
</dbReference>
<dbReference type="PANTHER" id="PTHR33694">
    <property type="entry name" value="UDP-3-O-ACYL-N-ACETYLGLUCOSAMINE DEACETYLASE 1, MITOCHONDRIAL-RELATED"/>
    <property type="match status" value="1"/>
</dbReference>
<dbReference type="PANTHER" id="PTHR33694:SF1">
    <property type="entry name" value="UDP-3-O-ACYL-N-ACETYLGLUCOSAMINE DEACETYLASE 1, MITOCHONDRIAL-RELATED"/>
    <property type="match status" value="1"/>
</dbReference>
<dbReference type="Pfam" id="PF03331">
    <property type="entry name" value="LpxC"/>
    <property type="match status" value="1"/>
</dbReference>
<dbReference type="SUPFAM" id="SSF54211">
    <property type="entry name" value="Ribosomal protein S5 domain 2-like"/>
    <property type="match status" value="2"/>
</dbReference>
<reference key="1">
    <citation type="journal article" date="2006" name="DNA Res.">
        <title>Genome sequence of the cat pathogen, Chlamydophila felis.</title>
        <authorList>
            <person name="Azuma Y."/>
            <person name="Hirakawa H."/>
            <person name="Yamashita A."/>
            <person name="Cai Y."/>
            <person name="Rahman M.A."/>
            <person name="Suzuki H."/>
            <person name="Mitaku S."/>
            <person name="Toh H."/>
            <person name="Goto S."/>
            <person name="Murakami T."/>
            <person name="Sugi K."/>
            <person name="Hayashi H."/>
            <person name="Fukushi H."/>
            <person name="Hattori M."/>
            <person name="Kuhara S."/>
            <person name="Shirai M."/>
        </authorList>
    </citation>
    <scope>NUCLEOTIDE SEQUENCE [LARGE SCALE GENOMIC DNA]</scope>
    <source>
        <strain>Fe/C-56</strain>
    </source>
</reference>
<feature type="chain" id="PRO_0000253658" description="UDP-3-O-acyl-N-acetylglucosamine deacetylase">
    <location>
        <begin position="1"/>
        <end position="280"/>
    </location>
</feature>
<feature type="active site" description="Proton donor" evidence="1">
    <location>
        <position position="264"/>
    </location>
</feature>
<feature type="binding site" evidence="1">
    <location>
        <position position="79"/>
    </location>
    <ligand>
        <name>Zn(2+)</name>
        <dbReference type="ChEBI" id="CHEBI:29105"/>
    </ligand>
</feature>
<feature type="binding site" evidence="1">
    <location>
        <position position="237"/>
    </location>
    <ligand>
        <name>Zn(2+)</name>
        <dbReference type="ChEBI" id="CHEBI:29105"/>
    </ligand>
</feature>
<feature type="binding site" evidence="1">
    <location>
        <position position="241"/>
    </location>
    <ligand>
        <name>Zn(2+)</name>
        <dbReference type="ChEBI" id="CHEBI:29105"/>
    </ligand>
</feature>
<organism>
    <name type="scientific">Chlamydia felis (strain Fe/C-56)</name>
    <name type="common">Chlamydophila felis</name>
    <dbReference type="NCBI Taxonomy" id="264202"/>
    <lineage>
        <taxon>Bacteria</taxon>
        <taxon>Pseudomonadati</taxon>
        <taxon>Chlamydiota</taxon>
        <taxon>Chlamydiia</taxon>
        <taxon>Chlamydiales</taxon>
        <taxon>Chlamydiaceae</taxon>
        <taxon>Chlamydia/Chlamydophila group</taxon>
        <taxon>Chlamydia</taxon>
    </lineage>
</organism>
<gene>
    <name evidence="1" type="primary">lpxC</name>
    <name type="ordered locus">CF0918</name>
</gene>
<protein>
    <recommendedName>
        <fullName evidence="1">UDP-3-O-acyl-N-acetylglucosamine deacetylase</fullName>
        <shortName evidence="1">UDP-3-O-acyl-GlcNAc deacetylase</shortName>
        <ecNumber evidence="1">3.5.1.108</ecNumber>
    </recommendedName>
    <alternativeName>
        <fullName evidence="1">UDP-3-O-[R-3-hydroxymyristoyl]-N-acetylglucosamine deacetylase</fullName>
    </alternativeName>
</protein>
<name>LPXC_CHLFF</name>
<proteinExistence type="inferred from homology"/>